<keyword id="KW-0479">Metal-binding</keyword>
<keyword id="KW-0539">Nucleus</keyword>
<keyword id="KW-1185">Reference proteome</keyword>
<keyword id="KW-0808">Transferase</keyword>
<keyword id="KW-0833">Ubl conjugation pathway</keyword>
<keyword id="KW-0862">Zinc</keyword>
<keyword id="KW-0863">Zinc-finger</keyword>
<organism>
    <name type="scientific">Mus musculus</name>
    <name type="common">Mouse</name>
    <dbReference type="NCBI Taxonomy" id="10090"/>
    <lineage>
        <taxon>Eukaryota</taxon>
        <taxon>Metazoa</taxon>
        <taxon>Chordata</taxon>
        <taxon>Craniata</taxon>
        <taxon>Vertebrata</taxon>
        <taxon>Euteleostomi</taxon>
        <taxon>Mammalia</taxon>
        <taxon>Eutheria</taxon>
        <taxon>Euarchontoglires</taxon>
        <taxon>Glires</taxon>
        <taxon>Rodentia</taxon>
        <taxon>Myomorpha</taxon>
        <taxon>Muroidea</taxon>
        <taxon>Muridae</taxon>
        <taxon>Murinae</taxon>
        <taxon>Mus</taxon>
        <taxon>Mus</taxon>
    </lineage>
</organism>
<comment type="function">
    <text evidence="1">Acts as an E3 ubiquitin-protein ligase able to ubiquitinate p53/TP53 which promotes its relocalization to discrete foci associated with PML nuclear bodies. Exhibits preference for UBE2D2 as a E2 enzyme.</text>
</comment>
<comment type="catalytic activity">
    <reaction>
        <text>S-ubiquitinyl-[E2 ubiquitin-conjugating enzyme]-L-cysteine + [acceptor protein]-L-lysine = [E2 ubiquitin-conjugating enzyme]-L-cysteine + N(6)-ubiquitinyl-[acceptor protein]-L-lysine.</text>
        <dbReference type="EC" id="2.3.2.27"/>
    </reaction>
</comment>
<comment type="pathway">
    <text>Protein modification; protein ubiquitination.</text>
</comment>
<comment type="subcellular location">
    <subcellularLocation>
        <location evidence="1">Nucleus</location>
    </subcellularLocation>
</comment>
<comment type="sequence caution" evidence="4">
    <conflict type="miscellaneous discrepancy">
        <sequence resource="EMBL-CDS" id="BAC26547"/>
    </conflict>
    <text>Chimeric cDNA. Chimeric cDNA originating from chromosomes 1 and 4.</text>
</comment>
<protein>
    <recommendedName>
        <fullName evidence="4">E3 ubiquitin-protein ligase RNF38</fullName>
        <ecNumber>2.3.2.27</ecNumber>
    </recommendedName>
    <alternativeName>
        <fullName>RING finger protein 38</fullName>
    </alternativeName>
    <alternativeName>
        <fullName evidence="4">RING-type E3 ubiquitin transferase RNF38</fullName>
    </alternativeName>
</protein>
<accession>Q8BI21</accession>
<accession>Q6P5B1</accession>
<dbReference type="EC" id="2.3.2.27"/>
<dbReference type="EMBL" id="AL732563">
    <property type="status" value="NOT_ANNOTATED_CDS"/>
    <property type="molecule type" value="Genomic_DNA"/>
</dbReference>
<dbReference type="EMBL" id="AL805952">
    <property type="status" value="NOT_ANNOTATED_CDS"/>
    <property type="molecule type" value="Genomic_DNA"/>
</dbReference>
<dbReference type="EMBL" id="BC060730">
    <property type="protein sequence ID" value="AAH60730.1"/>
    <property type="molecule type" value="mRNA"/>
</dbReference>
<dbReference type="EMBL" id="BC062976">
    <property type="protein sequence ID" value="AAH62976.1"/>
    <property type="molecule type" value="mRNA"/>
</dbReference>
<dbReference type="EMBL" id="AK029650">
    <property type="protein sequence ID" value="BAC26547.1"/>
    <property type="status" value="ALT_SEQ"/>
    <property type="molecule type" value="mRNA"/>
</dbReference>
<dbReference type="CCDS" id="CCDS18122.1"/>
<dbReference type="RefSeq" id="NP_780410.2">
    <property type="nucleotide sequence ID" value="NM_175201.7"/>
</dbReference>
<dbReference type="SMR" id="Q8BI21"/>
<dbReference type="BioGRID" id="216041">
    <property type="interactions" value="1"/>
</dbReference>
<dbReference type="FunCoup" id="Q8BI21">
    <property type="interactions" value="3902"/>
</dbReference>
<dbReference type="STRING" id="10090.ENSMUSP00000095702"/>
<dbReference type="GlyGen" id="Q8BI21">
    <property type="glycosylation" value="1 site"/>
</dbReference>
<dbReference type="iPTMnet" id="Q8BI21"/>
<dbReference type="PhosphoSitePlus" id="Q8BI21"/>
<dbReference type="PaxDb" id="10090-ENSMUSP00000095702"/>
<dbReference type="Antibodypedia" id="2887">
    <property type="antibodies" value="86 antibodies from 20 providers"/>
</dbReference>
<dbReference type="DNASU" id="73469"/>
<dbReference type="Ensembl" id="ENSMUST00000098098.9">
    <property type="protein sequence ID" value="ENSMUSP00000095702.3"/>
    <property type="gene ID" value="ENSMUSG00000035696.16"/>
</dbReference>
<dbReference type="GeneID" id="73469"/>
<dbReference type="KEGG" id="mmu:73469"/>
<dbReference type="UCSC" id="uc008srs.2">
    <property type="organism name" value="mouse"/>
</dbReference>
<dbReference type="AGR" id="MGI:1920719"/>
<dbReference type="CTD" id="152006"/>
<dbReference type="MGI" id="MGI:1920719">
    <property type="gene designation" value="Rnf38"/>
</dbReference>
<dbReference type="VEuPathDB" id="HostDB:ENSMUSG00000035696"/>
<dbReference type="eggNOG" id="KOG0800">
    <property type="taxonomic scope" value="Eukaryota"/>
</dbReference>
<dbReference type="GeneTree" id="ENSGT00940000156228"/>
<dbReference type="InParanoid" id="Q8BI21"/>
<dbReference type="OMA" id="IRPWESA"/>
<dbReference type="OrthoDB" id="8062037at2759"/>
<dbReference type="PhylomeDB" id="Q8BI21"/>
<dbReference type="TreeFam" id="TF325756"/>
<dbReference type="UniPathway" id="UPA00143"/>
<dbReference type="BioGRID-ORCS" id="73469">
    <property type="hits" value="4 hits in 80 CRISPR screens"/>
</dbReference>
<dbReference type="ChiTaRS" id="Rnf38">
    <property type="organism name" value="mouse"/>
</dbReference>
<dbReference type="PRO" id="PR:Q8BI21"/>
<dbReference type="Proteomes" id="UP000000589">
    <property type="component" value="Chromosome 4"/>
</dbReference>
<dbReference type="RNAct" id="Q8BI21">
    <property type="molecule type" value="protein"/>
</dbReference>
<dbReference type="Bgee" id="ENSMUSG00000035696">
    <property type="expression patterns" value="Expressed in animal zygote and 271 other cell types or tissues"/>
</dbReference>
<dbReference type="ExpressionAtlas" id="Q8BI21">
    <property type="expression patterns" value="baseline and differential"/>
</dbReference>
<dbReference type="GO" id="GO:0005654">
    <property type="term" value="C:nucleoplasm"/>
    <property type="evidence" value="ECO:0007669"/>
    <property type="project" value="Ensembl"/>
</dbReference>
<dbReference type="GO" id="GO:0061630">
    <property type="term" value="F:ubiquitin protein ligase activity"/>
    <property type="evidence" value="ECO:0007669"/>
    <property type="project" value="Ensembl"/>
</dbReference>
<dbReference type="GO" id="GO:0008270">
    <property type="term" value="F:zinc ion binding"/>
    <property type="evidence" value="ECO:0007669"/>
    <property type="project" value="UniProtKB-KW"/>
</dbReference>
<dbReference type="GO" id="GO:0016567">
    <property type="term" value="P:protein ubiquitination"/>
    <property type="evidence" value="ECO:0007669"/>
    <property type="project" value="UniProtKB-UniPathway"/>
</dbReference>
<dbReference type="CDD" id="cd16679">
    <property type="entry name" value="RING-H2_RNF38"/>
    <property type="match status" value="1"/>
</dbReference>
<dbReference type="FunFam" id="3.30.40.10:FF:000024">
    <property type="entry name" value="RING finger protein 44 isoform X1"/>
    <property type="match status" value="1"/>
</dbReference>
<dbReference type="Gene3D" id="3.30.40.10">
    <property type="entry name" value="Zinc/RING finger domain, C3HC4 (zinc finger)"/>
    <property type="match status" value="1"/>
</dbReference>
<dbReference type="InterPro" id="IPR001841">
    <property type="entry name" value="Znf_RING"/>
</dbReference>
<dbReference type="InterPro" id="IPR013083">
    <property type="entry name" value="Znf_RING/FYVE/PHD"/>
</dbReference>
<dbReference type="PANTHER" id="PTHR46171:SF1">
    <property type="entry name" value="E3 UBIQUITIN-PROTEIN LIGASE RNF38"/>
    <property type="match status" value="1"/>
</dbReference>
<dbReference type="PANTHER" id="PTHR46171">
    <property type="entry name" value="GH10160P"/>
    <property type="match status" value="1"/>
</dbReference>
<dbReference type="Pfam" id="PF13639">
    <property type="entry name" value="zf-RING_2"/>
    <property type="match status" value="1"/>
</dbReference>
<dbReference type="SMART" id="SM00184">
    <property type="entry name" value="RING"/>
    <property type="match status" value="1"/>
</dbReference>
<dbReference type="SUPFAM" id="SSF57850">
    <property type="entry name" value="RING/U-box"/>
    <property type="match status" value="1"/>
</dbReference>
<dbReference type="PROSITE" id="PS50089">
    <property type="entry name" value="ZF_RING_2"/>
    <property type="match status" value="1"/>
</dbReference>
<feature type="chain" id="PRO_0000056079" description="E3 ubiquitin-protein ligase RNF38">
    <location>
        <begin position="1"/>
        <end position="464"/>
    </location>
</feature>
<feature type="zinc finger region" description="RING-type" evidence="2">
    <location>
        <begin position="412"/>
        <end position="453"/>
    </location>
</feature>
<feature type="region of interest" description="Disordered" evidence="3">
    <location>
        <begin position="1"/>
        <end position="94"/>
    </location>
</feature>
<feature type="short sequence motif" description="Bipartite nuclear localization signal 1" evidence="1">
    <location>
        <begin position="6"/>
        <end position="20"/>
    </location>
</feature>
<feature type="short sequence motif" description="Bipartite nuclear localization signal 2" evidence="1">
    <location>
        <begin position="64"/>
        <end position="79"/>
    </location>
</feature>
<feature type="compositionally biased region" description="Polar residues" evidence="3">
    <location>
        <begin position="38"/>
        <end position="53"/>
    </location>
</feature>
<feature type="compositionally biased region" description="Basic residues" evidence="3">
    <location>
        <begin position="64"/>
        <end position="83"/>
    </location>
</feature>
<gene>
    <name evidence="5" type="primary">Rnf38</name>
</gene>
<sequence>MRESEDSPSPKRQRLSHSVFDYTSASPAPSPPMRPWEMTSNRQPPSVRPNQHHFSGERCNTPARNRRSPPVRRQRGRRERLSRHNSISQDENYHHLPYAQQQAIEEPRAFHPPNVSPRLLHPAAHPPQQNAVMVDIHDQLHQGTVPVSYTVTTVAPHGLPLCTGQHIPACSTQQVPGCSVVFSGQHLPVCSVPPPMLQACSVQHLPVPYAAFPPLISSDPFLIHPPHLSPHHPPHLPPPGQFVPFQTQQSRSPLQRIENEVELLGEHLQVGSFTYPPSAHPPTLPPSAPLQFLTHDPLHQEVSFGVPYPPFMPRRLTGRSRYRSQQPMPPPPYHPSLLPYVLSMLPVPPAVGPTFSFELDVEDGEVENYEALLNLAERLGEAKPRGLTKADIEQLPSYRFNPSNHQSEQTLCVVCMCDFESRQLLRVLPCNHEFHAKCVDKWLKGNRTCPICRADASEVHRDSE</sequence>
<evidence type="ECO:0000250" key="1"/>
<evidence type="ECO:0000255" key="2">
    <source>
        <dbReference type="PROSITE-ProRule" id="PRU00175"/>
    </source>
</evidence>
<evidence type="ECO:0000256" key="3">
    <source>
        <dbReference type="SAM" id="MobiDB-lite"/>
    </source>
</evidence>
<evidence type="ECO:0000305" key="4"/>
<evidence type="ECO:0000312" key="5">
    <source>
        <dbReference type="MGI" id="MGI:1920719"/>
    </source>
</evidence>
<proteinExistence type="evidence at transcript level"/>
<name>RNF38_MOUSE</name>
<reference key="1">
    <citation type="journal article" date="2009" name="PLoS Biol.">
        <title>Lineage-specific biology revealed by a finished genome assembly of the mouse.</title>
        <authorList>
            <person name="Church D.M."/>
            <person name="Goodstadt L."/>
            <person name="Hillier L.W."/>
            <person name="Zody M.C."/>
            <person name="Goldstein S."/>
            <person name="She X."/>
            <person name="Bult C.J."/>
            <person name="Agarwala R."/>
            <person name="Cherry J.L."/>
            <person name="DiCuccio M."/>
            <person name="Hlavina W."/>
            <person name="Kapustin Y."/>
            <person name="Meric P."/>
            <person name="Maglott D."/>
            <person name="Birtle Z."/>
            <person name="Marques A.C."/>
            <person name="Graves T."/>
            <person name="Zhou S."/>
            <person name="Teague B."/>
            <person name="Potamousis K."/>
            <person name="Churas C."/>
            <person name="Place M."/>
            <person name="Herschleb J."/>
            <person name="Runnheim R."/>
            <person name="Forrest D."/>
            <person name="Amos-Landgraf J."/>
            <person name="Schwartz D.C."/>
            <person name="Cheng Z."/>
            <person name="Lindblad-Toh K."/>
            <person name="Eichler E.E."/>
            <person name="Ponting C.P."/>
        </authorList>
    </citation>
    <scope>NUCLEOTIDE SEQUENCE [LARGE SCALE GENOMIC DNA]</scope>
    <source>
        <strain>C57BL/6J</strain>
    </source>
</reference>
<reference key="2">
    <citation type="journal article" date="2004" name="Genome Res.">
        <title>The status, quality, and expansion of the NIH full-length cDNA project: the Mammalian Gene Collection (MGC).</title>
        <authorList>
            <consortium name="The MGC Project Team"/>
        </authorList>
    </citation>
    <scope>NUCLEOTIDE SEQUENCE [LARGE SCALE MRNA]</scope>
    <source>
        <strain>C57BL/6J</strain>
        <tissue>Brain</tissue>
    </source>
</reference>
<reference key="3">
    <citation type="journal article" date="2005" name="Science">
        <title>The transcriptional landscape of the mammalian genome.</title>
        <authorList>
            <person name="Carninci P."/>
            <person name="Kasukawa T."/>
            <person name="Katayama S."/>
            <person name="Gough J."/>
            <person name="Frith M.C."/>
            <person name="Maeda N."/>
            <person name="Oyama R."/>
            <person name="Ravasi T."/>
            <person name="Lenhard B."/>
            <person name="Wells C."/>
            <person name="Kodzius R."/>
            <person name="Shimokawa K."/>
            <person name="Bajic V.B."/>
            <person name="Brenner S.E."/>
            <person name="Batalov S."/>
            <person name="Forrest A.R."/>
            <person name="Zavolan M."/>
            <person name="Davis M.J."/>
            <person name="Wilming L.G."/>
            <person name="Aidinis V."/>
            <person name="Allen J.E."/>
            <person name="Ambesi-Impiombato A."/>
            <person name="Apweiler R."/>
            <person name="Aturaliya R.N."/>
            <person name="Bailey T.L."/>
            <person name="Bansal M."/>
            <person name="Baxter L."/>
            <person name="Beisel K.W."/>
            <person name="Bersano T."/>
            <person name="Bono H."/>
            <person name="Chalk A.M."/>
            <person name="Chiu K.P."/>
            <person name="Choudhary V."/>
            <person name="Christoffels A."/>
            <person name="Clutterbuck D.R."/>
            <person name="Crowe M.L."/>
            <person name="Dalla E."/>
            <person name="Dalrymple B.P."/>
            <person name="de Bono B."/>
            <person name="Della Gatta G."/>
            <person name="di Bernardo D."/>
            <person name="Down T."/>
            <person name="Engstrom P."/>
            <person name="Fagiolini M."/>
            <person name="Faulkner G."/>
            <person name="Fletcher C.F."/>
            <person name="Fukushima T."/>
            <person name="Furuno M."/>
            <person name="Futaki S."/>
            <person name="Gariboldi M."/>
            <person name="Georgii-Hemming P."/>
            <person name="Gingeras T.R."/>
            <person name="Gojobori T."/>
            <person name="Green R.E."/>
            <person name="Gustincich S."/>
            <person name="Harbers M."/>
            <person name="Hayashi Y."/>
            <person name="Hensch T.K."/>
            <person name="Hirokawa N."/>
            <person name="Hill D."/>
            <person name="Huminiecki L."/>
            <person name="Iacono M."/>
            <person name="Ikeo K."/>
            <person name="Iwama A."/>
            <person name="Ishikawa T."/>
            <person name="Jakt M."/>
            <person name="Kanapin A."/>
            <person name="Katoh M."/>
            <person name="Kawasawa Y."/>
            <person name="Kelso J."/>
            <person name="Kitamura H."/>
            <person name="Kitano H."/>
            <person name="Kollias G."/>
            <person name="Krishnan S.P."/>
            <person name="Kruger A."/>
            <person name="Kummerfeld S.K."/>
            <person name="Kurochkin I.V."/>
            <person name="Lareau L.F."/>
            <person name="Lazarevic D."/>
            <person name="Lipovich L."/>
            <person name="Liu J."/>
            <person name="Liuni S."/>
            <person name="McWilliam S."/>
            <person name="Madan Babu M."/>
            <person name="Madera M."/>
            <person name="Marchionni L."/>
            <person name="Matsuda H."/>
            <person name="Matsuzawa S."/>
            <person name="Miki H."/>
            <person name="Mignone F."/>
            <person name="Miyake S."/>
            <person name="Morris K."/>
            <person name="Mottagui-Tabar S."/>
            <person name="Mulder N."/>
            <person name="Nakano N."/>
            <person name="Nakauchi H."/>
            <person name="Ng P."/>
            <person name="Nilsson R."/>
            <person name="Nishiguchi S."/>
            <person name="Nishikawa S."/>
            <person name="Nori F."/>
            <person name="Ohara O."/>
            <person name="Okazaki Y."/>
            <person name="Orlando V."/>
            <person name="Pang K.C."/>
            <person name="Pavan W.J."/>
            <person name="Pavesi G."/>
            <person name="Pesole G."/>
            <person name="Petrovsky N."/>
            <person name="Piazza S."/>
            <person name="Reed J."/>
            <person name="Reid J.F."/>
            <person name="Ring B.Z."/>
            <person name="Ringwald M."/>
            <person name="Rost B."/>
            <person name="Ruan Y."/>
            <person name="Salzberg S.L."/>
            <person name="Sandelin A."/>
            <person name="Schneider C."/>
            <person name="Schoenbach C."/>
            <person name="Sekiguchi K."/>
            <person name="Semple C.A."/>
            <person name="Seno S."/>
            <person name="Sessa L."/>
            <person name="Sheng Y."/>
            <person name="Shibata Y."/>
            <person name="Shimada H."/>
            <person name="Shimada K."/>
            <person name="Silva D."/>
            <person name="Sinclair B."/>
            <person name="Sperling S."/>
            <person name="Stupka E."/>
            <person name="Sugiura K."/>
            <person name="Sultana R."/>
            <person name="Takenaka Y."/>
            <person name="Taki K."/>
            <person name="Tammoja K."/>
            <person name="Tan S.L."/>
            <person name="Tang S."/>
            <person name="Taylor M.S."/>
            <person name="Tegner J."/>
            <person name="Teichmann S.A."/>
            <person name="Ueda H.R."/>
            <person name="van Nimwegen E."/>
            <person name="Verardo R."/>
            <person name="Wei C.L."/>
            <person name="Yagi K."/>
            <person name="Yamanishi H."/>
            <person name="Zabarovsky E."/>
            <person name="Zhu S."/>
            <person name="Zimmer A."/>
            <person name="Hide W."/>
            <person name="Bult C."/>
            <person name="Grimmond S.M."/>
            <person name="Teasdale R.D."/>
            <person name="Liu E.T."/>
            <person name="Brusic V."/>
            <person name="Quackenbush J."/>
            <person name="Wahlestedt C."/>
            <person name="Mattick J.S."/>
            <person name="Hume D.A."/>
            <person name="Kai C."/>
            <person name="Sasaki D."/>
            <person name="Tomaru Y."/>
            <person name="Fukuda S."/>
            <person name="Kanamori-Katayama M."/>
            <person name="Suzuki M."/>
            <person name="Aoki J."/>
            <person name="Arakawa T."/>
            <person name="Iida J."/>
            <person name="Imamura K."/>
            <person name="Itoh M."/>
            <person name="Kato T."/>
            <person name="Kawaji H."/>
            <person name="Kawagashira N."/>
            <person name="Kawashima T."/>
            <person name="Kojima M."/>
            <person name="Kondo S."/>
            <person name="Konno H."/>
            <person name="Nakano K."/>
            <person name="Ninomiya N."/>
            <person name="Nishio T."/>
            <person name="Okada M."/>
            <person name="Plessy C."/>
            <person name="Shibata K."/>
            <person name="Shiraki T."/>
            <person name="Suzuki S."/>
            <person name="Tagami M."/>
            <person name="Waki K."/>
            <person name="Watahiki A."/>
            <person name="Okamura-Oho Y."/>
            <person name="Suzuki H."/>
            <person name="Kawai J."/>
            <person name="Hayashizaki Y."/>
        </authorList>
    </citation>
    <scope>NUCLEOTIDE SEQUENCE [LARGE SCALE MRNA] OF 4-464</scope>
    <source>
        <strain>C57BL/6J</strain>
        <tissue>Testis</tissue>
    </source>
</reference>